<gene>
    <name evidence="1" type="primary">thrB</name>
    <name type="ordered locus">STH2556</name>
</gene>
<organism>
    <name type="scientific">Symbiobacterium thermophilum (strain DSM 24528 / JCM 14929 / IAM 14863 / T)</name>
    <dbReference type="NCBI Taxonomy" id="292459"/>
    <lineage>
        <taxon>Bacteria</taxon>
        <taxon>Bacillati</taxon>
        <taxon>Bacillota</taxon>
        <taxon>Clostridia</taxon>
        <taxon>Eubacteriales</taxon>
        <taxon>Symbiobacteriaceae</taxon>
        <taxon>Symbiobacterium</taxon>
    </lineage>
</organism>
<dbReference type="EC" id="2.7.1.39" evidence="1"/>
<dbReference type="EMBL" id="AP006840">
    <property type="protein sequence ID" value="BAD41541.1"/>
    <property type="molecule type" value="Genomic_DNA"/>
</dbReference>
<dbReference type="RefSeq" id="WP_011196679.1">
    <property type="nucleotide sequence ID" value="NC_006177.1"/>
</dbReference>
<dbReference type="SMR" id="Q67LA5"/>
<dbReference type="STRING" id="292459.STH2556"/>
<dbReference type="KEGG" id="sth:STH2556"/>
<dbReference type="eggNOG" id="COG0083">
    <property type="taxonomic scope" value="Bacteria"/>
</dbReference>
<dbReference type="HOGENOM" id="CLU_041243_0_2_9"/>
<dbReference type="OrthoDB" id="9769912at2"/>
<dbReference type="UniPathway" id="UPA00050">
    <property type="reaction ID" value="UER00064"/>
</dbReference>
<dbReference type="Proteomes" id="UP000000417">
    <property type="component" value="Chromosome"/>
</dbReference>
<dbReference type="GO" id="GO:0005737">
    <property type="term" value="C:cytoplasm"/>
    <property type="evidence" value="ECO:0007669"/>
    <property type="project" value="UniProtKB-SubCell"/>
</dbReference>
<dbReference type="GO" id="GO:0005524">
    <property type="term" value="F:ATP binding"/>
    <property type="evidence" value="ECO:0007669"/>
    <property type="project" value="UniProtKB-UniRule"/>
</dbReference>
<dbReference type="GO" id="GO:0004413">
    <property type="term" value="F:homoserine kinase activity"/>
    <property type="evidence" value="ECO:0007669"/>
    <property type="project" value="UniProtKB-UniRule"/>
</dbReference>
<dbReference type="GO" id="GO:0009088">
    <property type="term" value="P:threonine biosynthetic process"/>
    <property type="evidence" value="ECO:0007669"/>
    <property type="project" value="UniProtKB-UniRule"/>
</dbReference>
<dbReference type="Gene3D" id="3.30.230.10">
    <property type="match status" value="1"/>
</dbReference>
<dbReference type="Gene3D" id="3.30.70.890">
    <property type="entry name" value="GHMP kinase, C-terminal domain"/>
    <property type="match status" value="1"/>
</dbReference>
<dbReference type="HAMAP" id="MF_00384">
    <property type="entry name" value="Homoser_kinase"/>
    <property type="match status" value="1"/>
</dbReference>
<dbReference type="InterPro" id="IPR013750">
    <property type="entry name" value="GHMP_kinase_C_dom"/>
</dbReference>
<dbReference type="InterPro" id="IPR036554">
    <property type="entry name" value="GHMP_kinase_C_sf"/>
</dbReference>
<dbReference type="InterPro" id="IPR006204">
    <property type="entry name" value="GHMP_kinase_N_dom"/>
</dbReference>
<dbReference type="InterPro" id="IPR006203">
    <property type="entry name" value="GHMP_knse_ATP-bd_CS"/>
</dbReference>
<dbReference type="InterPro" id="IPR000870">
    <property type="entry name" value="Homoserine_kinase"/>
</dbReference>
<dbReference type="InterPro" id="IPR020568">
    <property type="entry name" value="Ribosomal_Su5_D2-typ_SF"/>
</dbReference>
<dbReference type="InterPro" id="IPR014721">
    <property type="entry name" value="Ribsml_uS5_D2-typ_fold_subgr"/>
</dbReference>
<dbReference type="NCBIfam" id="TIGR00191">
    <property type="entry name" value="thrB"/>
    <property type="match status" value="1"/>
</dbReference>
<dbReference type="PANTHER" id="PTHR20861:SF1">
    <property type="entry name" value="HOMOSERINE KINASE"/>
    <property type="match status" value="1"/>
</dbReference>
<dbReference type="PANTHER" id="PTHR20861">
    <property type="entry name" value="HOMOSERINE/4-DIPHOSPHOCYTIDYL-2-C-METHYL-D-ERYTHRITOL KINASE"/>
    <property type="match status" value="1"/>
</dbReference>
<dbReference type="Pfam" id="PF08544">
    <property type="entry name" value="GHMP_kinases_C"/>
    <property type="match status" value="1"/>
</dbReference>
<dbReference type="Pfam" id="PF00288">
    <property type="entry name" value="GHMP_kinases_N"/>
    <property type="match status" value="1"/>
</dbReference>
<dbReference type="PIRSF" id="PIRSF000676">
    <property type="entry name" value="Homoser_kin"/>
    <property type="match status" value="1"/>
</dbReference>
<dbReference type="PRINTS" id="PR00958">
    <property type="entry name" value="HOMSERKINASE"/>
</dbReference>
<dbReference type="SUPFAM" id="SSF55060">
    <property type="entry name" value="GHMP Kinase, C-terminal domain"/>
    <property type="match status" value="1"/>
</dbReference>
<dbReference type="SUPFAM" id="SSF54211">
    <property type="entry name" value="Ribosomal protein S5 domain 2-like"/>
    <property type="match status" value="1"/>
</dbReference>
<dbReference type="PROSITE" id="PS00627">
    <property type="entry name" value="GHMP_KINASES_ATP"/>
    <property type="match status" value="1"/>
</dbReference>
<keyword id="KW-0028">Amino-acid biosynthesis</keyword>
<keyword id="KW-0067">ATP-binding</keyword>
<keyword id="KW-0963">Cytoplasm</keyword>
<keyword id="KW-0418">Kinase</keyword>
<keyword id="KW-0547">Nucleotide-binding</keyword>
<keyword id="KW-1185">Reference proteome</keyword>
<keyword id="KW-0791">Threonine biosynthesis</keyword>
<keyword id="KW-0808">Transferase</keyword>
<feature type="chain" id="PRO_0000156621" description="Homoserine kinase">
    <location>
        <begin position="1"/>
        <end position="324"/>
    </location>
</feature>
<feature type="binding site" evidence="1">
    <location>
        <begin position="87"/>
        <end position="97"/>
    </location>
    <ligand>
        <name>ATP</name>
        <dbReference type="ChEBI" id="CHEBI:30616"/>
    </ligand>
</feature>
<sequence>MVRVSVPATSANLGPGFDTLGVALELRNVIEMDETGIDDVVIEVEGAGAGALEDPGRNMVYQAARLVFQRLGYEPNGLLIREKVAIPVARGMGSSAAAIVGGLVAANALVQKRTGGPGLDREELLRMAVAIEGHPDNVTPALLGGFTVSCMDPDRGPLYLCFPPPRGLRAVVVMPEVQIKGRKTEQSRGVLPAQVSLRDAVYNLNRTALLVAAVAQGRTDLLRVAMQDRLHQPYRAALVPGMRSVFEAALSAGALGVALSGAGPSVIALVAESAEPVALAMEAAFQWAGSNARSLTMDLAREGARVLSGPGREQDMLDRPPHWG</sequence>
<reference key="1">
    <citation type="journal article" date="2004" name="Nucleic Acids Res.">
        <title>Genome sequence of Symbiobacterium thermophilum, an uncultivable bacterium that depends on microbial commensalism.</title>
        <authorList>
            <person name="Ueda K."/>
            <person name="Yamashita A."/>
            <person name="Ishikawa J."/>
            <person name="Shimada M."/>
            <person name="Watsuji T."/>
            <person name="Morimura K."/>
            <person name="Ikeda H."/>
            <person name="Hattori M."/>
            <person name="Beppu T."/>
        </authorList>
    </citation>
    <scope>NUCLEOTIDE SEQUENCE [LARGE SCALE GENOMIC DNA]</scope>
    <source>
        <strain>DSM 24528 / JCM 14929 / IAM 14863 / T</strain>
    </source>
</reference>
<evidence type="ECO:0000255" key="1">
    <source>
        <dbReference type="HAMAP-Rule" id="MF_00384"/>
    </source>
</evidence>
<accession>Q67LA5</accession>
<name>KHSE_SYMTH</name>
<protein>
    <recommendedName>
        <fullName evidence="1">Homoserine kinase</fullName>
        <shortName evidence="1">HK</shortName>
        <shortName evidence="1">HSK</shortName>
        <ecNumber evidence="1">2.7.1.39</ecNumber>
    </recommendedName>
</protein>
<comment type="function">
    <text evidence="1">Catalyzes the ATP-dependent phosphorylation of L-homoserine to L-homoserine phosphate.</text>
</comment>
<comment type="catalytic activity">
    <reaction evidence="1">
        <text>L-homoserine + ATP = O-phospho-L-homoserine + ADP + H(+)</text>
        <dbReference type="Rhea" id="RHEA:13985"/>
        <dbReference type="ChEBI" id="CHEBI:15378"/>
        <dbReference type="ChEBI" id="CHEBI:30616"/>
        <dbReference type="ChEBI" id="CHEBI:57476"/>
        <dbReference type="ChEBI" id="CHEBI:57590"/>
        <dbReference type="ChEBI" id="CHEBI:456216"/>
        <dbReference type="EC" id="2.7.1.39"/>
    </reaction>
</comment>
<comment type="pathway">
    <text evidence="1">Amino-acid biosynthesis; L-threonine biosynthesis; L-threonine from L-aspartate: step 4/5.</text>
</comment>
<comment type="subcellular location">
    <subcellularLocation>
        <location evidence="1">Cytoplasm</location>
    </subcellularLocation>
</comment>
<comment type="similarity">
    <text evidence="1">Belongs to the GHMP kinase family. Homoserine kinase subfamily.</text>
</comment>
<proteinExistence type="inferred from homology"/>